<name>ISPT_GLOVI</name>
<feature type="chain" id="PRO_0000123618" description="Isoprenyl transferase">
    <location>
        <begin position="1"/>
        <end position="249"/>
    </location>
</feature>
<feature type="active site" evidence="1">
    <location>
        <position position="29"/>
    </location>
</feature>
<feature type="active site" description="Proton acceptor" evidence="1">
    <location>
        <position position="77"/>
    </location>
</feature>
<feature type="binding site" evidence="1">
    <location>
        <position position="29"/>
    </location>
    <ligand>
        <name>Mg(2+)</name>
        <dbReference type="ChEBI" id="CHEBI:18420"/>
    </ligand>
</feature>
<feature type="binding site" evidence="1">
    <location>
        <begin position="30"/>
        <end position="33"/>
    </location>
    <ligand>
        <name>substrate</name>
    </ligand>
</feature>
<feature type="binding site" evidence="1">
    <location>
        <position position="34"/>
    </location>
    <ligand>
        <name>substrate</name>
    </ligand>
</feature>
<feature type="binding site" evidence="1">
    <location>
        <position position="42"/>
    </location>
    <ligand>
        <name>substrate</name>
    </ligand>
</feature>
<feature type="binding site" evidence="1">
    <location>
        <position position="46"/>
    </location>
    <ligand>
        <name>substrate</name>
    </ligand>
</feature>
<feature type="binding site" evidence="1">
    <location>
        <begin position="74"/>
        <end position="76"/>
    </location>
    <ligand>
        <name>substrate</name>
    </ligand>
</feature>
<feature type="binding site" evidence="1">
    <location>
        <position position="78"/>
    </location>
    <ligand>
        <name>substrate</name>
    </ligand>
</feature>
<feature type="binding site" evidence="1">
    <location>
        <position position="80"/>
    </location>
    <ligand>
        <name>substrate</name>
    </ligand>
</feature>
<feature type="binding site" evidence="1">
    <location>
        <position position="197"/>
    </location>
    <ligand>
        <name>substrate</name>
    </ligand>
</feature>
<feature type="binding site" evidence="1">
    <location>
        <begin position="203"/>
        <end position="205"/>
    </location>
    <ligand>
        <name>substrate</name>
    </ligand>
</feature>
<feature type="binding site" evidence="1">
    <location>
        <position position="216"/>
    </location>
    <ligand>
        <name>Mg(2+)</name>
        <dbReference type="ChEBI" id="CHEBI:18420"/>
    </ligand>
</feature>
<evidence type="ECO:0000255" key="1">
    <source>
        <dbReference type="HAMAP-Rule" id="MF_01139"/>
    </source>
</evidence>
<gene>
    <name evidence="1" type="primary">uppS</name>
    <name type="ordered locus">gll0108</name>
</gene>
<keyword id="KW-0460">Magnesium</keyword>
<keyword id="KW-0479">Metal-binding</keyword>
<keyword id="KW-1185">Reference proteome</keyword>
<keyword id="KW-0808">Transferase</keyword>
<proteinExistence type="inferred from homology"/>
<accession>Q7NPE7</accession>
<comment type="function">
    <text evidence="1">Catalyzes the condensation of isopentenyl diphosphate (IPP) with allylic pyrophosphates generating different type of terpenoids.</text>
</comment>
<comment type="cofactor">
    <cofactor evidence="1">
        <name>Mg(2+)</name>
        <dbReference type="ChEBI" id="CHEBI:18420"/>
    </cofactor>
    <text evidence="1">Binds 2 magnesium ions per subunit.</text>
</comment>
<comment type="subunit">
    <text evidence="1">Homodimer.</text>
</comment>
<comment type="similarity">
    <text evidence="1">Belongs to the UPP synthase family.</text>
</comment>
<sequence length="249" mass="28175">MTTPHTLLRSLPSDLDPNRLPRHVAAIMDGNGRWASKRNLPRVMGHQAGVSALKELLRCCKDWGIGALTVYAFSTENWKRPQYEVEFLMALFEKVLNHELSEMVDEGVRIRFVGALAHLPGALQSAIEGAMAATEANTAVEFTVATNYGGRQEIVNACRELAEQVRSGRLLPEQIDEKLFAQHLYTRELSDPDLLIRTSGEQRLSNYLLWQMAYTEIYVADVLWPDFDRAAFHAALQSYQGRQRRFGKV</sequence>
<dbReference type="EC" id="2.5.1.-" evidence="1"/>
<dbReference type="EMBL" id="BA000045">
    <property type="protein sequence ID" value="BAC88049.1"/>
    <property type="molecule type" value="Genomic_DNA"/>
</dbReference>
<dbReference type="RefSeq" id="NP_923054.1">
    <property type="nucleotide sequence ID" value="NC_005125.1"/>
</dbReference>
<dbReference type="RefSeq" id="WP_011140112.1">
    <property type="nucleotide sequence ID" value="NC_005125.1"/>
</dbReference>
<dbReference type="SMR" id="Q7NPE7"/>
<dbReference type="FunCoup" id="Q7NPE7">
    <property type="interactions" value="170"/>
</dbReference>
<dbReference type="STRING" id="251221.gene:10757577"/>
<dbReference type="EnsemblBacteria" id="BAC88049">
    <property type="protein sequence ID" value="BAC88049"/>
    <property type="gene ID" value="BAC88049"/>
</dbReference>
<dbReference type="KEGG" id="gvi:gll0108"/>
<dbReference type="PATRIC" id="fig|251221.4.peg.110"/>
<dbReference type="eggNOG" id="COG0020">
    <property type="taxonomic scope" value="Bacteria"/>
</dbReference>
<dbReference type="HOGENOM" id="CLU_038505_1_1_3"/>
<dbReference type="InParanoid" id="Q7NPE7"/>
<dbReference type="OrthoDB" id="4191603at2"/>
<dbReference type="PhylomeDB" id="Q7NPE7"/>
<dbReference type="Proteomes" id="UP000000557">
    <property type="component" value="Chromosome"/>
</dbReference>
<dbReference type="GO" id="GO:0000287">
    <property type="term" value="F:magnesium ion binding"/>
    <property type="evidence" value="ECO:0007669"/>
    <property type="project" value="UniProtKB-UniRule"/>
</dbReference>
<dbReference type="GO" id="GO:0004659">
    <property type="term" value="F:prenyltransferase activity"/>
    <property type="evidence" value="ECO:0007669"/>
    <property type="project" value="UniProtKB-UniRule"/>
</dbReference>
<dbReference type="GO" id="GO:0016094">
    <property type="term" value="P:polyprenol biosynthetic process"/>
    <property type="evidence" value="ECO:0000318"/>
    <property type="project" value="GO_Central"/>
</dbReference>
<dbReference type="CDD" id="cd00475">
    <property type="entry name" value="Cis_IPPS"/>
    <property type="match status" value="1"/>
</dbReference>
<dbReference type="FunFam" id="3.40.1180.10:FF:000001">
    <property type="entry name" value="(2E,6E)-farnesyl-diphosphate-specific ditrans,polycis-undecaprenyl-diphosphate synthase"/>
    <property type="match status" value="1"/>
</dbReference>
<dbReference type="Gene3D" id="3.40.1180.10">
    <property type="entry name" value="Decaprenyl diphosphate synthase-like"/>
    <property type="match status" value="1"/>
</dbReference>
<dbReference type="HAMAP" id="MF_01139">
    <property type="entry name" value="ISPT"/>
    <property type="match status" value="1"/>
</dbReference>
<dbReference type="InterPro" id="IPR001441">
    <property type="entry name" value="UPP_synth-like"/>
</dbReference>
<dbReference type="InterPro" id="IPR018520">
    <property type="entry name" value="UPP_synth-like_CS"/>
</dbReference>
<dbReference type="InterPro" id="IPR036424">
    <property type="entry name" value="UPP_synth-like_sf"/>
</dbReference>
<dbReference type="NCBIfam" id="NF011405">
    <property type="entry name" value="PRK14830.1"/>
    <property type="match status" value="1"/>
</dbReference>
<dbReference type="NCBIfam" id="NF011406">
    <property type="entry name" value="PRK14831.1"/>
    <property type="match status" value="1"/>
</dbReference>
<dbReference type="NCBIfam" id="TIGR00055">
    <property type="entry name" value="uppS"/>
    <property type="match status" value="1"/>
</dbReference>
<dbReference type="PANTHER" id="PTHR10291:SF0">
    <property type="entry name" value="DEHYDRODOLICHYL DIPHOSPHATE SYNTHASE 2"/>
    <property type="match status" value="1"/>
</dbReference>
<dbReference type="PANTHER" id="PTHR10291">
    <property type="entry name" value="DEHYDRODOLICHYL DIPHOSPHATE SYNTHASE FAMILY MEMBER"/>
    <property type="match status" value="1"/>
</dbReference>
<dbReference type="Pfam" id="PF01255">
    <property type="entry name" value="Prenyltransf"/>
    <property type="match status" value="1"/>
</dbReference>
<dbReference type="SUPFAM" id="SSF64005">
    <property type="entry name" value="Undecaprenyl diphosphate synthase"/>
    <property type="match status" value="1"/>
</dbReference>
<dbReference type="PROSITE" id="PS01066">
    <property type="entry name" value="UPP_SYNTHASE"/>
    <property type="match status" value="1"/>
</dbReference>
<reference key="1">
    <citation type="journal article" date="2003" name="DNA Res.">
        <title>Complete genome structure of Gloeobacter violaceus PCC 7421, a cyanobacterium that lacks thylakoids.</title>
        <authorList>
            <person name="Nakamura Y."/>
            <person name="Kaneko T."/>
            <person name="Sato S."/>
            <person name="Mimuro M."/>
            <person name="Miyashita H."/>
            <person name="Tsuchiya T."/>
            <person name="Sasamoto S."/>
            <person name="Watanabe A."/>
            <person name="Kawashima K."/>
            <person name="Kishida Y."/>
            <person name="Kiyokawa C."/>
            <person name="Kohara M."/>
            <person name="Matsumoto M."/>
            <person name="Matsuno A."/>
            <person name="Nakazaki N."/>
            <person name="Shimpo S."/>
            <person name="Takeuchi C."/>
            <person name="Yamada M."/>
            <person name="Tabata S."/>
        </authorList>
    </citation>
    <scope>NUCLEOTIDE SEQUENCE [LARGE SCALE GENOMIC DNA]</scope>
    <source>
        <strain>ATCC 29082 / PCC 7421</strain>
    </source>
</reference>
<organism>
    <name type="scientific">Gloeobacter violaceus (strain ATCC 29082 / PCC 7421)</name>
    <dbReference type="NCBI Taxonomy" id="251221"/>
    <lineage>
        <taxon>Bacteria</taxon>
        <taxon>Bacillati</taxon>
        <taxon>Cyanobacteriota</taxon>
        <taxon>Cyanophyceae</taxon>
        <taxon>Gloeobacterales</taxon>
        <taxon>Gloeobacteraceae</taxon>
        <taxon>Gloeobacter</taxon>
    </lineage>
</organism>
<protein>
    <recommendedName>
        <fullName evidence="1">Isoprenyl transferase</fullName>
        <ecNumber evidence="1">2.5.1.-</ecNumber>
    </recommendedName>
</protein>